<keyword id="KW-0456">Lyase</keyword>
<keyword id="KW-0460">Magnesium</keyword>
<keyword id="KW-0479">Metal-binding</keyword>
<sequence length="442" mass="47830">MASSAHSDSASADASAEIPAEILAPAPWSTPADDSEHLRITAVRTFLTAPQGCPYVIVRVETNQPGLYGLGCASDPQRTLAIRSVVDDYYAPMLLGRDPSDIEDLHRLLFNSGYWRGGSIGQNALAGVDVALWDIKGKVAGLPLHQLLGGRAREAADAYTHVDGDNAGEIAEKVLAAHERGYRHVRVQVSVPGTDTYGTAPRDAAEARRRELRAGSWDSLAYLRHVPPVLREIRERVGTGVELLHDAHERLTPSQARELVHEVEDARLFFLEDALAPEDAAHFDQLRAAGSVPLAVGELYHDVMMYLPLLQRQVIDFARIRIPTLGGLTPTRKLVAAVELFGARTAPHGPGDVSPVGMAANLGLDLSSPAFGVQEAATFREATREVFPGTPVPERGRFHGTGLPGLGVDFDEAAARKYPVPEPLRHDRWALLRNGDGSVQRP</sequence>
<reference key="1">
    <citation type="submission" date="2009-02" db="EMBL/GenBank/DDBJ databases">
        <title>Annotation of Streptomyces sp. strain SPB78.</title>
        <authorList>
            <consortium name="The Broad Institute Genome Sequencing Platform, Broad Institute Microbial Sequencing Center"/>
            <person name="Fischbach M."/>
            <person name="Godfrey P."/>
            <person name="Ward D."/>
            <person name="Young S."/>
            <person name="Zeng Q."/>
            <person name="Koehrsen M."/>
            <person name="Alvarado L."/>
            <person name="Berlin A.M."/>
            <person name="Bochicchio J."/>
            <person name="Borenstein D."/>
            <person name="Chapman S.B."/>
            <person name="Chen Z."/>
            <person name="Engels R."/>
            <person name="Freedman E."/>
            <person name="Gellesch M."/>
            <person name="Goldberg J."/>
            <person name="Griggs A."/>
            <person name="Gujja S."/>
            <person name="Heilman E.R."/>
            <person name="Heiman D.I."/>
            <person name="Hepburn T.A."/>
            <person name="Howarth C."/>
            <person name="Jen D."/>
            <person name="Larson L."/>
            <person name="Lewis B."/>
            <person name="Mehta T."/>
            <person name="Park D."/>
            <person name="Pearson M."/>
            <person name="Richards J."/>
            <person name="Roberts A."/>
            <person name="Saif S."/>
            <person name="Shea T.D."/>
            <person name="Shenoy N."/>
            <person name="Sisk P."/>
            <person name="Stolte C."/>
            <person name="Sykes S.N."/>
            <person name="Thomson T."/>
            <person name="Walk T."/>
            <person name="White J."/>
            <person name="Yandava C."/>
            <person name="Straight P."/>
            <person name="Clardy J."/>
            <person name="Hung D."/>
            <person name="Kolter R."/>
            <person name="Mekalanos J."/>
            <person name="Walker S."/>
            <person name="Walsh C.T."/>
            <person name="Wieland-Brown L.C."/>
            <person name="Haas B."/>
            <person name="Nusbaum C."/>
            <person name="Birren B."/>
        </authorList>
    </citation>
    <scope>NUCLEOTIDE SEQUENCE [LARGE SCALE GENOMIC DNA]</scope>
    <source>
        <strain>SPB78</strain>
    </source>
</reference>
<reference key="2">
    <citation type="journal article" date="2014" name="Biochemistry">
        <title>Discovery of function in the enolase superfamily: D-mannonate and D-gluconate dehydratases in the D-mannonate dehydratase subgroup.</title>
        <authorList>
            <person name="Wichelecki D.J."/>
            <person name="Balthazor B.M."/>
            <person name="Chau A.C."/>
            <person name="Vetting M.W."/>
            <person name="Fedorov A.A."/>
            <person name="Fedorov E.V."/>
            <person name="Lukk T."/>
            <person name="Patskovsky Y.V."/>
            <person name="Stead M.B."/>
            <person name="Hillerich B.S."/>
            <person name="Seidel R.D."/>
            <person name="Almo S.C."/>
            <person name="Gerlt J.A."/>
        </authorList>
    </citation>
    <scope>FUNCTION</scope>
    <scope>CATALYTIC ACTIVITY</scope>
    <scope>COFACTOR</scope>
    <scope>BIOPHYSICOCHEMICAL PROPERTIES</scope>
    <source>
        <strain>SPB78</strain>
    </source>
</reference>
<organism>
    <name type="scientific">Streptomyces sp. (strain SPB78)</name>
    <dbReference type="NCBI Taxonomy" id="591157"/>
    <lineage>
        <taxon>Bacteria</taxon>
        <taxon>Bacillati</taxon>
        <taxon>Actinomycetota</taxon>
        <taxon>Actinomycetes</taxon>
        <taxon>Kitasatosporales</taxon>
        <taxon>Streptomycetaceae</taxon>
        <taxon>Streptomyces</taxon>
    </lineage>
</organism>
<comment type="function">
    <text evidence="2">Has low D-mannonate dehydratase activity (in vitro), suggesting that this is not a physiological substrate and that it has no significant role in D-mannonate degradation in vivo. Has no detectable activity with a panel of 70 other acid sugars (in vitro).</text>
</comment>
<comment type="catalytic activity">
    <reaction evidence="2">
        <text>D-mannonate = 2-dehydro-3-deoxy-D-gluconate + H2O</text>
        <dbReference type="Rhea" id="RHEA:20097"/>
        <dbReference type="ChEBI" id="CHEBI:15377"/>
        <dbReference type="ChEBI" id="CHEBI:17767"/>
        <dbReference type="ChEBI" id="CHEBI:57990"/>
        <dbReference type="EC" id="4.2.1.8"/>
    </reaction>
</comment>
<comment type="cofactor">
    <cofactor evidence="2">
        <name>Mg(2+)</name>
        <dbReference type="ChEBI" id="CHEBI:18420"/>
    </cofactor>
    <text evidence="2">Binds 1 Mg(2+) ion per subunit.</text>
</comment>
<comment type="biophysicochemical properties">
    <kinetics>
        <text evidence="2">kcat is 0.004 sec(-1) with D-mannonate.</text>
    </kinetics>
</comment>
<comment type="similarity">
    <text evidence="3">Belongs to the mandelate racemase/muconate lactonizing enzyme family. GalD subfamily.</text>
</comment>
<evidence type="ECO:0000250" key="1"/>
<evidence type="ECO:0000269" key="2">
    <source>
    </source>
</evidence>
<evidence type="ECO:0000305" key="3"/>
<protein>
    <recommendedName>
        <fullName>D-galactonate dehydratase family member SSLG_02014</fullName>
        <ecNumber>4.2.1.-</ecNumber>
    </recommendedName>
    <alternativeName>
        <fullName>D-mannonate dehydratase</fullName>
        <ecNumber>4.2.1.8</ecNumber>
    </alternativeName>
</protein>
<name>MAND_STRS3</name>
<feature type="chain" id="PRO_0000429891" description="D-galactonate dehydratase family member SSLG_02014">
    <location>
        <begin position="1"/>
        <end position="442"/>
    </location>
</feature>
<feature type="active site" description="Proton donor/acceptor" evidence="1">
    <location>
        <position position="197"/>
    </location>
</feature>
<feature type="active site" description="Proton donor/acceptor" evidence="1">
    <location>
        <position position="248"/>
    </location>
</feature>
<feature type="binding site" evidence="1">
    <location>
        <position position="161"/>
    </location>
    <ligand>
        <name>substrate</name>
    </ligand>
</feature>
<feature type="binding site" evidence="1">
    <location>
        <position position="246"/>
    </location>
    <ligand>
        <name>Mg(2+)</name>
        <dbReference type="ChEBI" id="CHEBI:18420"/>
    </ligand>
</feature>
<feature type="binding site" evidence="1">
    <location>
        <position position="272"/>
    </location>
    <ligand>
        <name>Mg(2+)</name>
        <dbReference type="ChEBI" id="CHEBI:18420"/>
    </ligand>
</feature>
<feature type="binding site" evidence="1">
    <location>
        <position position="298"/>
    </location>
    <ligand>
        <name>Mg(2+)</name>
        <dbReference type="ChEBI" id="CHEBI:18420"/>
    </ligand>
</feature>
<feature type="binding site" evidence="1">
    <location>
        <position position="298"/>
    </location>
    <ligand>
        <name>substrate</name>
    </ligand>
</feature>
<feature type="binding site" evidence="1">
    <location>
        <position position="319"/>
    </location>
    <ligand>
        <name>substrate</name>
    </ligand>
</feature>
<feature type="binding site" evidence="1">
    <location>
        <position position="348"/>
    </location>
    <ligand>
        <name>substrate</name>
    </ligand>
</feature>
<feature type="binding site" evidence="1">
    <location>
        <position position="352"/>
    </location>
    <ligand>
        <name>substrate</name>
    </ligand>
</feature>
<feature type="binding site" evidence="1">
    <location>
        <position position="375"/>
    </location>
    <ligand>
        <name>substrate</name>
    </ligand>
</feature>
<feature type="site" description="Important for activity and substrate specificity; Pro is observed in family members with low D-mannonate dehydratase activity" evidence="1">
    <location>
        <position position="350"/>
    </location>
</feature>
<proteinExistence type="evidence at protein level"/>
<gene>
    <name type="ORF">SSLG_02014</name>
</gene>
<dbReference type="EC" id="4.2.1.-"/>
<dbReference type="EC" id="4.2.1.8"/>
<dbReference type="EMBL" id="GG657742">
    <property type="protein sequence ID" value="EFK99955.1"/>
    <property type="molecule type" value="Genomic_DNA"/>
</dbReference>
<dbReference type="RefSeq" id="WP_009065588.1">
    <property type="nucleotide sequence ID" value="NZ_GG657742.1"/>
</dbReference>
<dbReference type="SMR" id="D9UNB2"/>
<dbReference type="STRING" id="591157.SSLG_02014"/>
<dbReference type="eggNOG" id="COG4948">
    <property type="taxonomic scope" value="Bacteria"/>
</dbReference>
<dbReference type="HOGENOM" id="CLU_030273_6_1_11"/>
<dbReference type="Proteomes" id="UP000005781">
    <property type="component" value="Unassembled WGS sequence"/>
</dbReference>
<dbReference type="GO" id="GO:0000287">
    <property type="term" value="F:magnesium ion binding"/>
    <property type="evidence" value="ECO:0000314"/>
    <property type="project" value="UniProtKB"/>
</dbReference>
<dbReference type="GO" id="GO:0008927">
    <property type="term" value="F:mannonate dehydratase activity"/>
    <property type="evidence" value="ECO:0000314"/>
    <property type="project" value="UniProtKB"/>
</dbReference>
<dbReference type="GO" id="GO:0009063">
    <property type="term" value="P:amino acid catabolic process"/>
    <property type="evidence" value="ECO:0007669"/>
    <property type="project" value="InterPro"/>
</dbReference>
<dbReference type="GO" id="GO:0016052">
    <property type="term" value="P:carbohydrate catabolic process"/>
    <property type="evidence" value="ECO:0000314"/>
    <property type="project" value="UniProtKB"/>
</dbReference>
<dbReference type="FunFam" id="3.20.20.120:FF:000005">
    <property type="entry name" value="Putative L-rhamnonate dehydratase"/>
    <property type="match status" value="1"/>
</dbReference>
<dbReference type="Gene3D" id="3.20.20.120">
    <property type="entry name" value="Enolase-like C-terminal domain"/>
    <property type="match status" value="1"/>
</dbReference>
<dbReference type="Gene3D" id="3.30.390.10">
    <property type="entry name" value="Enolase-like, N-terminal domain"/>
    <property type="match status" value="1"/>
</dbReference>
<dbReference type="InterPro" id="IPR034593">
    <property type="entry name" value="DgoD-like"/>
</dbReference>
<dbReference type="InterPro" id="IPR036849">
    <property type="entry name" value="Enolase-like_C_sf"/>
</dbReference>
<dbReference type="InterPro" id="IPR029017">
    <property type="entry name" value="Enolase-like_N"/>
</dbReference>
<dbReference type="InterPro" id="IPR029065">
    <property type="entry name" value="Enolase_C-like"/>
</dbReference>
<dbReference type="InterPro" id="IPR018110">
    <property type="entry name" value="Mandel_Rmase/mucon_lact_enz_CS"/>
</dbReference>
<dbReference type="InterPro" id="IPR013342">
    <property type="entry name" value="Mandelate_racemase_C"/>
</dbReference>
<dbReference type="InterPro" id="IPR013341">
    <property type="entry name" value="Mandelate_racemase_N_dom"/>
</dbReference>
<dbReference type="PANTHER" id="PTHR48080">
    <property type="entry name" value="D-GALACTONATE DEHYDRATASE-RELATED"/>
    <property type="match status" value="1"/>
</dbReference>
<dbReference type="PANTHER" id="PTHR48080:SF6">
    <property type="entry name" value="STARVATION-SENSING PROTEIN RSPA"/>
    <property type="match status" value="1"/>
</dbReference>
<dbReference type="Pfam" id="PF13378">
    <property type="entry name" value="MR_MLE_C"/>
    <property type="match status" value="1"/>
</dbReference>
<dbReference type="Pfam" id="PF02746">
    <property type="entry name" value="MR_MLE_N"/>
    <property type="match status" value="1"/>
</dbReference>
<dbReference type="SFLD" id="SFLDS00001">
    <property type="entry name" value="Enolase"/>
    <property type="match status" value="1"/>
</dbReference>
<dbReference type="SMART" id="SM00922">
    <property type="entry name" value="MR_MLE"/>
    <property type="match status" value="1"/>
</dbReference>
<dbReference type="SUPFAM" id="SSF51604">
    <property type="entry name" value="Enolase C-terminal domain-like"/>
    <property type="match status" value="1"/>
</dbReference>
<dbReference type="SUPFAM" id="SSF54826">
    <property type="entry name" value="Enolase N-terminal domain-like"/>
    <property type="match status" value="1"/>
</dbReference>
<dbReference type="PROSITE" id="PS00908">
    <property type="entry name" value="MR_MLE_1"/>
    <property type="match status" value="1"/>
</dbReference>
<accession>D9UNB2</accession>